<dbReference type="EMBL" id="AE009948">
    <property type="protein sequence ID" value="AAN00172.1"/>
    <property type="molecule type" value="Genomic_DNA"/>
</dbReference>
<dbReference type="RefSeq" id="NP_688299.1">
    <property type="nucleotide sequence ID" value="NC_004116.1"/>
</dbReference>
<dbReference type="RefSeq" id="WP_001196973.1">
    <property type="nucleotide sequence ID" value="NC_004116.1"/>
</dbReference>
<dbReference type="SMR" id="Q8DZ21"/>
<dbReference type="STRING" id="208435.SAG1301"/>
<dbReference type="GeneID" id="66886170"/>
<dbReference type="KEGG" id="sag:SAG1301"/>
<dbReference type="PATRIC" id="fig|208435.3.peg.1311"/>
<dbReference type="HOGENOM" id="CLU_086499_3_2_9"/>
<dbReference type="OrthoDB" id="9811748at2"/>
<dbReference type="Proteomes" id="UP000000821">
    <property type="component" value="Chromosome"/>
</dbReference>
<dbReference type="GO" id="GO:0022625">
    <property type="term" value="C:cytosolic large ribosomal subunit"/>
    <property type="evidence" value="ECO:0007669"/>
    <property type="project" value="TreeGrafter"/>
</dbReference>
<dbReference type="GO" id="GO:0003729">
    <property type="term" value="F:mRNA binding"/>
    <property type="evidence" value="ECO:0007669"/>
    <property type="project" value="TreeGrafter"/>
</dbReference>
<dbReference type="GO" id="GO:0003735">
    <property type="term" value="F:structural constituent of ribosome"/>
    <property type="evidence" value="ECO:0007669"/>
    <property type="project" value="InterPro"/>
</dbReference>
<dbReference type="GO" id="GO:0006412">
    <property type="term" value="P:translation"/>
    <property type="evidence" value="ECO:0007669"/>
    <property type="project" value="UniProtKB-UniRule"/>
</dbReference>
<dbReference type="CDD" id="cd00387">
    <property type="entry name" value="Ribosomal_L7_L12"/>
    <property type="match status" value="1"/>
</dbReference>
<dbReference type="FunFam" id="1.20.5.710:FF:000002">
    <property type="entry name" value="50S ribosomal protein L7/L12"/>
    <property type="match status" value="1"/>
</dbReference>
<dbReference type="FunFam" id="3.30.1390.10:FF:000001">
    <property type="entry name" value="50S ribosomal protein L7/L12"/>
    <property type="match status" value="1"/>
</dbReference>
<dbReference type="Gene3D" id="3.30.1390.10">
    <property type="match status" value="1"/>
</dbReference>
<dbReference type="Gene3D" id="1.20.5.710">
    <property type="entry name" value="Single helix bin"/>
    <property type="match status" value="1"/>
</dbReference>
<dbReference type="HAMAP" id="MF_00368">
    <property type="entry name" value="Ribosomal_bL12"/>
    <property type="match status" value="1"/>
</dbReference>
<dbReference type="InterPro" id="IPR000206">
    <property type="entry name" value="Ribosomal_bL12"/>
</dbReference>
<dbReference type="InterPro" id="IPR013823">
    <property type="entry name" value="Ribosomal_bL12_C"/>
</dbReference>
<dbReference type="InterPro" id="IPR014719">
    <property type="entry name" value="Ribosomal_bL12_C/ClpS-like"/>
</dbReference>
<dbReference type="InterPro" id="IPR008932">
    <property type="entry name" value="Ribosomal_bL12_oligo"/>
</dbReference>
<dbReference type="InterPro" id="IPR036235">
    <property type="entry name" value="Ribosomal_bL12_oligo_N_sf"/>
</dbReference>
<dbReference type="NCBIfam" id="TIGR00855">
    <property type="entry name" value="L12"/>
    <property type="match status" value="1"/>
</dbReference>
<dbReference type="PANTHER" id="PTHR45987">
    <property type="entry name" value="39S RIBOSOMAL PROTEIN L12"/>
    <property type="match status" value="1"/>
</dbReference>
<dbReference type="PANTHER" id="PTHR45987:SF4">
    <property type="entry name" value="LARGE RIBOSOMAL SUBUNIT PROTEIN BL12M"/>
    <property type="match status" value="1"/>
</dbReference>
<dbReference type="Pfam" id="PF00542">
    <property type="entry name" value="Ribosomal_L12"/>
    <property type="match status" value="1"/>
</dbReference>
<dbReference type="Pfam" id="PF16320">
    <property type="entry name" value="Ribosomal_L12_N"/>
    <property type="match status" value="1"/>
</dbReference>
<dbReference type="SUPFAM" id="SSF54736">
    <property type="entry name" value="ClpS-like"/>
    <property type="match status" value="1"/>
</dbReference>
<dbReference type="SUPFAM" id="SSF48300">
    <property type="entry name" value="Ribosomal protein L7/12, oligomerisation (N-terminal) domain"/>
    <property type="match status" value="1"/>
</dbReference>
<sequence length="121" mass="12329">MALNIENIIAEIKEATILELNDLVKAIEEEFGVTAAAPVAAAAAGGEAAAAKDSFDVELTAAGDKKVGVIKVVREITGEGLKEAKAIVDNAPSVIKEGASEAEANEIKEKLEAAGASVTLK</sequence>
<gene>
    <name evidence="1" type="primary">rplL</name>
    <name type="ordered locus">SAG1301</name>
</gene>
<keyword id="KW-1185">Reference proteome</keyword>
<keyword id="KW-0687">Ribonucleoprotein</keyword>
<keyword id="KW-0689">Ribosomal protein</keyword>
<protein>
    <recommendedName>
        <fullName evidence="1">Large ribosomal subunit protein bL12</fullName>
    </recommendedName>
    <alternativeName>
        <fullName evidence="2">50S ribosomal protein L7/L12</fullName>
    </alternativeName>
</protein>
<feature type="chain" id="PRO_0000243501" description="Large ribosomal subunit protein bL12">
    <location>
        <begin position="1"/>
        <end position="121"/>
    </location>
</feature>
<comment type="function">
    <text evidence="1">Forms part of the ribosomal stalk which helps the ribosome interact with GTP-bound translation factors. Is thus essential for accurate translation.</text>
</comment>
<comment type="subunit">
    <text evidence="1">Homodimer. Part of the ribosomal stalk of the 50S ribosomal subunit. Forms a multimeric L10(L12)X complex, where L10 forms an elongated spine to which 2 to 4 L12 dimers bind in a sequential fashion. Binds GTP-bound translation factors.</text>
</comment>
<comment type="similarity">
    <text evidence="1">Belongs to the bacterial ribosomal protein bL12 family.</text>
</comment>
<reference key="1">
    <citation type="journal article" date="2002" name="Proc. Natl. Acad. Sci. U.S.A.">
        <title>Complete genome sequence and comparative genomic analysis of an emerging human pathogen, serotype V Streptococcus agalactiae.</title>
        <authorList>
            <person name="Tettelin H."/>
            <person name="Masignani V."/>
            <person name="Cieslewicz M.J."/>
            <person name="Eisen J.A."/>
            <person name="Peterson S.N."/>
            <person name="Wessels M.R."/>
            <person name="Paulsen I.T."/>
            <person name="Nelson K.E."/>
            <person name="Margarit I."/>
            <person name="Read T.D."/>
            <person name="Madoff L.C."/>
            <person name="Wolf A.M."/>
            <person name="Beanan M.J."/>
            <person name="Brinkac L.M."/>
            <person name="Daugherty S.C."/>
            <person name="DeBoy R.T."/>
            <person name="Durkin A.S."/>
            <person name="Kolonay J.F."/>
            <person name="Madupu R."/>
            <person name="Lewis M.R."/>
            <person name="Radune D."/>
            <person name="Fedorova N.B."/>
            <person name="Scanlan D."/>
            <person name="Khouri H.M."/>
            <person name="Mulligan S."/>
            <person name="Carty H.A."/>
            <person name="Cline R.T."/>
            <person name="Van Aken S.E."/>
            <person name="Gill J."/>
            <person name="Scarselli M."/>
            <person name="Mora M."/>
            <person name="Iacobini E.T."/>
            <person name="Brettoni C."/>
            <person name="Galli G."/>
            <person name="Mariani M."/>
            <person name="Vegni F."/>
            <person name="Maione D."/>
            <person name="Rinaudo D."/>
            <person name="Rappuoli R."/>
            <person name="Telford J.L."/>
            <person name="Kasper D.L."/>
            <person name="Grandi G."/>
            <person name="Fraser C.M."/>
        </authorList>
    </citation>
    <scope>NUCLEOTIDE SEQUENCE [LARGE SCALE GENOMIC DNA]</scope>
    <source>
        <strain>ATCC BAA-611 / 2603 V/R</strain>
    </source>
</reference>
<accession>Q8DZ21</accession>
<proteinExistence type="inferred from homology"/>
<name>RL7_STRA5</name>
<organism>
    <name type="scientific">Streptococcus agalactiae serotype V (strain ATCC BAA-611 / 2603 V/R)</name>
    <dbReference type="NCBI Taxonomy" id="208435"/>
    <lineage>
        <taxon>Bacteria</taxon>
        <taxon>Bacillati</taxon>
        <taxon>Bacillota</taxon>
        <taxon>Bacilli</taxon>
        <taxon>Lactobacillales</taxon>
        <taxon>Streptococcaceae</taxon>
        <taxon>Streptococcus</taxon>
    </lineage>
</organism>
<evidence type="ECO:0000255" key="1">
    <source>
        <dbReference type="HAMAP-Rule" id="MF_00368"/>
    </source>
</evidence>
<evidence type="ECO:0000305" key="2"/>